<evidence type="ECO:0000250" key="1"/>
<evidence type="ECO:0000255" key="2"/>
<evidence type="ECO:0000305" key="3"/>
<keyword id="KW-0903">Direct protein sequencing</keyword>
<keyword id="KW-1015">Disulfide bond</keyword>
<keyword id="KW-0528">Neurotoxin</keyword>
<keyword id="KW-0629">Postsynaptic neurotoxin</keyword>
<keyword id="KW-0964">Secreted</keyword>
<keyword id="KW-0732">Signal</keyword>
<keyword id="KW-0800">Toxin</keyword>
<reference key="1">
    <citation type="journal article" date="2010" name="J. Proteome Res.">
        <title>Molecular diversification of peptide toxins from the tarantula Haplopelma hainanum (Ornithoctonus hainana) venom based on transcriptomic, peptidomic, and genomic analyses.</title>
        <authorList>
            <person name="Tang X."/>
            <person name="Zhang Y."/>
            <person name="Hu W."/>
            <person name="Xu D."/>
            <person name="Tao H."/>
            <person name="Yang X."/>
            <person name="Li Y."/>
            <person name="Jiang L."/>
            <person name="Liang S."/>
        </authorList>
    </citation>
    <scope>NUCLEOTIDE SEQUENCE [LARGE SCALE MRNA]</scope>
    <scope>PROTEIN SEQUENCE OF 49-85</scope>
    <scope>IDENTIFICATION BY MASS SPECTROMETRY</scope>
    <source>
        <tissue>Venom</tissue>
        <tissue>Venom gland</tissue>
    </source>
</reference>
<sequence>MKVTLIAILTCAAVLVLHTTAAEELEESQLMEVGMPDTELAAVDGERLFECSVSCEIEKEGNKDCKKKKCKGGWKCKFNMCVKV</sequence>
<organism>
    <name type="scientific">Cyriopagopus hainanus</name>
    <name type="common">Chinese bird spider</name>
    <name type="synonym">Haplopelma hainanum</name>
    <dbReference type="NCBI Taxonomy" id="209901"/>
    <lineage>
        <taxon>Eukaryota</taxon>
        <taxon>Metazoa</taxon>
        <taxon>Ecdysozoa</taxon>
        <taxon>Arthropoda</taxon>
        <taxon>Chelicerata</taxon>
        <taxon>Arachnida</taxon>
        <taxon>Araneae</taxon>
        <taxon>Mygalomorphae</taxon>
        <taxon>Theraphosidae</taxon>
        <taxon>Haplopelma</taxon>
    </lineage>
</organism>
<name>H2A11_CYRHA</name>
<accession>D2Y229</accession>
<feature type="signal peptide" evidence="2">
    <location>
        <begin position="1"/>
        <end position="22"/>
    </location>
</feature>
<feature type="propeptide" id="PRO_0000400737">
    <location>
        <begin position="23"/>
        <end position="47"/>
    </location>
</feature>
<feature type="peptide" id="PRO_0000400738" description="U4-theraphotoxin-Hhn1a">
    <location>
        <begin position="48"/>
        <end position="84"/>
    </location>
</feature>
<feature type="disulfide bond" evidence="1">
    <location>
        <begin position="51"/>
        <end position="65"/>
    </location>
</feature>
<feature type="disulfide bond" evidence="1">
    <location>
        <begin position="55"/>
        <end position="76"/>
    </location>
</feature>
<feature type="disulfide bond" evidence="1">
    <location>
        <begin position="70"/>
        <end position="81"/>
    </location>
</feature>
<comment type="function">
    <text evidence="1">Postsynaptic neurotoxin.</text>
</comment>
<comment type="subcellular location">
    <subcellularLocation>
        <location>Secreted</location>
    </subcellularLocation>
</comment>
<comment type="tissue specificity">
    <text>Expressed by the venom gland.</text>
</comment>
<comment type="similarity">
    <text evidence="3">Belongs to the neurotoxin 12 (Hwtx-2) family. 02 (Hwtx-2) subfamily.</text>
</comment>
<protein>
    <recommendedName>
        <fullName>U4-theraphotoxin-Hhn1a</fullName>
        <shortName>U4-TRTX-Hhn1a</shortName>
    </recommendedName>
    <alternativeName>
        <fullName>Hainantoxin-II.11</fullName>
        <shortName>HNTX-II.11</shortName>
    </alternativeName>
    <alternativeName>
        <fullName>Peptide F8-20.15</fullName>
    </alternativeName>
</protein>
<dbReference type="EMBL" id="GU292906">
    <property type="protein sequence ID" value="ADB56722.1"/>
    <property type="molecule type" value="mRNA"/>
</dbReference>
<dbReference type="SMR" id="D2Y229"/>
<dbReference type="ArachnoServer" id="AS001783">
    <property type="toxin name" value="U4-theraphotoxin-Hhn1a"/>
</dbReference>
<dbReference type="GO" id="GO:0005576">
    <property type="term" value="C:extracellular region"/>
    <property type="evidence" value="ECO:0007669"/>
    <property type="project" value="UniProtKB-SubCell"/>
</dbReference>
<dbReference type="GO" id="GO:0035792">
    <property type="term" value="C:host cell postsynaptic membrane"/>
    <property type="evidence" value="ECO:0007669"/>
    <property type="project" value="UniProtKB-KW"/>
</dbReference>
<dbReference type="GO" id="GO:0090729">
    <property type="term" value="F:toxin activity"/>
    <property type="evidence" value="ECO:0007669"/>
    <property type="project" value="UniProtKB-KW"/>
</dbReference>
<dbReference type="InterPro" id="IPR012625">
    <property type="entry name" value="Hwtx-2-like"/>
</dbReference>
<dbReference type="Pfam" id="PF08089">
    <property type="entry name" value="Toxin_20"/>
    <property type="match status" value="1"/>
</dbReference>
<dbReference type="SUPFAM" id="SSF57059">
    <property type="entry name" value="omega toxin-like"/>
    <property type="match status" value="1"/>
</dbReference>
<dbReference type="PROSITE" id="PS60022">
    <property type="entry name" value="HWTX_2"/>
    <property type="match status" value="1"/>
</dbReference>
<proteinExistence type="evidence at protein level"/>